<organism>
    <name type="scientific">Homo sapiens</name>
    <name type="common">Human</name>
    <dbReference type="NCBI Taxonomy" id="9606"/>
    <lineage>
        <taxon>Eukaryota</taxon>
        <taxon>Metazoa</taxon>
        <taxon>Chordata</taxon>
        <taxon>Craniata</taxon>
        <taxon>Vertebrata</taxon>
        <taxon>Euteleostomi</taxon>
        <taxon>Mammalia</taxon>
        <taxon>Eutheria</taxon>
        <taxon>Euarchontoglires</taxon>
        <taxon>Primates</taxon>
        <taxon>Haplorrhini</taxon>
        <taxon>Catarrhini</taxon>
        <taxon>Hominidae</taxon>
        <taxon>Homo</taxon>
    </lineage>
</organism>
<accession>A8MPP1</accession>
<reference key="1">
    <citation type="journal article" date="2006" name="Nature">
        <title>The finished DNA sequence of human chromosome 12.</title>
        <authorList>
            <person name="Scherer S.E."/>
            <person name="Muzny D.M."/>
            <person name="Buhay C.J."/>
            <person name="Chen R."/>
            <person name="Cree A."/>
            <person name="Ding Y."/>
            <person name="Dugan-Rocha S."/>
            <person name="Gill R."/>
            <person name="Gunaratne P."/>
            <person name="Harris R.A."/>
            <person name="Hawes A.C."/>
            <person name="Hernandez J."/>
            <person name="Hodgson A.V."/>
            <person name="Hume J."/>
            <person name="Jackson A."/>
            <person name="Khan Z.M."/>
            <person name="Kovar-Smith C."/>
            <person name="Lewis L.R."/>
            <person name="Lozado R.J."/>
            <person name="Metzker M.L."/>
            <person name="Milosavljevic A."/>
            <person name="Miner G.R."/>
            <person name="Montgomery K.T."/>
            <person name="Morgan M.B."/>
            <person name="Nazareth L.V."/>
            <person name="Scott G."/>
            <person name="Sodergren E."/>
            <person name="Song X.-Z."/>
            <person name="Steffen D."/>
            <person name="Lovering R.C."/>
            <person name="Wheeler D.A."/>
            <person name="Worley K.C."/>
            <person name="Yuan Y."/>
            <person name="Zhang Z."/>
            <person name="Adams C.Q."/>
            <person name="Ansari-Lari M.A."/>
            <person name="Ayele M."/>
            <person name="Brown M.J."/>
            <person name="Chen G."/>
            <person name="Chen Z."/>
            <person name="Clerc-Blankenburg K.P."/>
            <person name="Davis C."/>
            <person name="Delgado O."/>
            <person name="Dinh H.H."/>
            <person name="Draper H."/>
            <person name="Gonzalez-Garay M.L."/>
            <person name="Havlak P."/>
            <person name="Jackson L.R."/>
            <person name="Jacob L.S."/>
            <person name="Kelly S.H."/>
            <person name="Li L."/>
            <person name="Li Z."/>
            <person name="Liu J."/>
            <person name="Liu W."/>
            <person name="Lu J."/>
            <person name="Maheshwari M."/>
            <person name="Nguyen B.-V."/>
            <person name="Okwuonu G.O."/>
            <person name="Pasternak S."/>
            <person name="Perez L.M."/>
            <person name="Plopper F.J.H."/>
            <person name="Santibanez J."/>
            <person name="Shen H."/>
            <person name="Tabor P.E."/>
            <person name="Verduzco D."/>
            <person name="Waldron L."/>
            <person name="Wang Q."/>
            <person name="Williams G.A."/>
            <person name="Zhang J."/>
            <person name="Zhou J."/>
            <person name="Allen C.C."/>
            <person name="Amin A.G."/>
            <person name="Anyalebechi V."/>
            <person name="Bailey M."/>
            <person name="Barbaria J.A."/>
            <person name="Bimage K.E."/>
            <person name="Bryant N.P."/>
            <person name="Burch P.E."/>
            <person name="Burkett C.E."/>
            <person name="Burrell K.L."/>
            <person name="Calderon E."/>
            <person name="Cardenas V."/>
            <person name="Carter K."/>
            <person name="Casias K."/>
            <person name="Cavazos I."/>
            <person name="Cavazos S.R."/>
            <person name="Ceasar H."/>
            <person name="Chacko J."/>
            <person name="Chan S.N."/>
            <person name="Chavez D."/>
            <person name="Christopoulos C."/>
            <person name="Chu J."/>
            <person name="Cockrell R."/>
            <person name="Cox C.D."/>
            <person name="Dang M."/>
            <person name="Dathorne S.R."/>
            <person name="David R."/>
            <person name="Davis C.M."/>
            <person name="Davy-Carroll L."/>
            <person name="Deshazo D.R."/>
            <person name="Donlin J.E."/>
            <person name="D'Souza L."/>
            <person name="Eaves K.A."/>
            <person name="Egan A."/>
            <person name="Emery-Cohen A.J."/>
            <person name="Escotto M."/>
            <person name="Flagg N."/>
            <person name="Forbes L.D."/>
            <person name="Gabisi A.M."/>
            <person name="Garza M."/>
            <person name="Hamilton C."/>
            <person name="Henderson N."/>
            <person name="Hernandez O."/>
            <person name="Hines S."/>
            <person name="Hogues M.E."/>
            <person name="Huang M."/>
            <person name="Idlebird D.G."/>
            <person name="Johnson R."/>
            <person name="Jolivet A."/>
            <person name="Jones S."/>
            <person name="Kagan R."/>
            <person name="King L.M."/>
            <person name="Leal B."/>
            <person name="Lebow H."/>
            <person name="Lee S."/>
            <person name="LeVan J.M."/>
            <person name="Lewis L.C."/>
            <person name="London P."/>
            <person name="Lorensuhewa L.M."/>
            <person name="Loulseged H."/>
            <person name="Lovett D.A."/>
            <person name="Lucier A."/>
            <person name="Lucier R.L."/>
            <person name="Ma J."/>
            <person name="Madu R.C."/>
            <person name="Mapua P."/>
            <person name="Martindale A.D."/>
            <person name="Martinez E."/>
            <person name="Massey E."/>
            <person name="Mawhiney S."/>
            <person name="Meador M.G."/>
            <person name="Mendez S."/>
            <person name="Mercado C."/>
            <person name="Mercado I.C."/>
            <person name="Merritt C.E."/>
            <person name="Miner Z.L."/>
            <person name="Minja E."/>
            <person name="Mitchell T."/>
            <person name="Mohabbat F."/>
            <person name="Mohabbat K."/>
            <person name="Montgomery B."/>
            <person name="Moore N."/>
            <person name="Morris S."/>
            <person name="Munidasa M."/>
            <person name="Ngo R.N."/>
            <person name="Nguyen N.B."/>
            <person name="Nickerson E."/>
            <person name="Nwaokelemeh O.O."/>
            <person name="Nwokenkwo S."/>
            <person name="Obregon M."/>
            <person name="Oguh M."/>
            <person name="Oragunye N."/>
            <person name="Oviedo R.J."/>
            <person name="Parish B.J."/>
            <person name="Parker D.N."/>
            <person name="Parrish J."/>
            <person name="Parks K.L."/>
            <person name="Paul H.A."/>
            <person name="Payton B.A."/>
            <person name="Perez A."/>
            <person name="Perrin W."/>
            <person name="Pickens A."/>
            <person name="Primus E.L."/>
            <person name="Pu L.-L."/>
            <person name="Puazo M."/>
            <person name="Quiles M.M."/>
            <person name="Quiroz J.B."/>
            <person name="Rabata D."/>
            <person name="Reeves K."/>
            <person name="Ruiz S.J."/>
            <person name="Shao H."/>
            <person name="Sisson I."/>
            <person name="Sonaike T."/>
            <person name="Sorelle R.P."/>
            <person name="Sutton A.E."/>
            <person name="Svatek A.F."/>
            <person name="Svetz L.A."/>
            <person name="Tamerisa K.S."/>
            <person name="Taylor T.R."/>
            <person name="Teague B."/>
            <person name="Thomas N."/>
            <person name="Thorn R.D."/>
            <person name="Trejos Z.Y."/>
            <person name="Trevino B.K."/>
            <person name="Ukegbu O.N."/>
            <person name="Urban J.B."/>
            <person name="Vasquez L.I."/>
            <person name="Vera V.A."/>
            <person name="Villasana D.M."/>
            <person name="Wang L."/>
            <person name="Ward-Moore S."/>
            <person name="Warren J.T."/>
            <person name="Wei X."/>
            <person name="White F."/>
            <person name="Williamson A.L."/>
            <person name="Wleczyk R."/>
            <person name="Wooden H.S."/>
            <person name="Wooden S.H."/>
            <person name="Yen J."/>
            <person name="Yoon L."/>
            <person name="Yoon V."/>
            <person name="Zorrilla S.E."/>
            <person name="Nelson D."/>
            <person name="Kucherlapati R."/>
            <person name="Weinstock G."/>
            <person name="Gibbs R.A."/>
        </authorList>
    </citation>
    <scope>NUCLEOTIDE SEQUENCE [LARGE SCALE GENOMIC DNA]</scope>
</reference>
<gene>
    <name type="primary">DDX11L8</name>
</gene>
<feature type="chain" id="PRO_0000349360" description="Putative ATP-dependent DNA helicase DDX11-like protein 8">
    <location>
        <begin position="1"/>
        <end position="907"/>
    </location>
</feature>
<feature type="domain" description="Helicase ATP-binding" evidence="4">
    <location>
        <begin position="9"/>
        <end position="447"/>
    </location>
</feature>
<feature type="region of interest" description="Disordered" evidence="5">
    <location>
        <begin position="202"/>
        <end position="222"/>
    </location>
</feature>
<feature type="region of interest" description="Disordered" evidence="5">
    <location>
        <begin position="291"/>
        <end position="314"/>
    </location>
</feature>
<feature type="short sequence motif" description="DEAH">
    <location>
        <begin position="395"/>
        <end position="398"/>
    </location>
</feature>
<feature type="compositionally biased region" description="Basic and acidic residues" evidence="5">
    <location>
        <begin position="206"/>
        <end position="217"/>
    </location>
</feature>
<feature type="compositionally biased region" description="Basic and acidic residues" evidence="5">
    <location>
        <begin position="291"/>
        <end position="306"/>
    </location>
</feature>
<feature type="binding site" evidence="4">
    <location>
        <begin position="44"/>
        <end position="51"/>
    </location>
    <ligand>
        <name>ATP</name>
        <dbReference type="ChEBI" id="CHEBI:30616"/>
    </ligand>
</feature>
<feature type="binding site" evidence="2">
    <location>
        <position position="269"/>
    </location>
    <ligand>
        <name>[4Fe-4S] cluster</name>
        <dbReference type="ChEBI" id="CHEBI:49883"/>
    </ligand>
</feature>
<feature type="binding site" evidence="2">
    <location>
        <position position="287"/>
    </location>
    <ligand>
        <name>[4Fe-4S] cluster</name>
        <dbReference type="ChEBI" id="CHEBI:49883"/>
    </ligand>
</feature>
<feature type="binding site" evidence="2">
    <location>
        <position position="317"/>
    </location>
    <ligand>
        <name>[4Fe-4S] cluster</name>
        <dbReference type="ChEBI" id="CHEBI:49883"/>
    </ligand>
</feature>
<feature type="binding site" evidence="2">
    <location>
        <position position="352"/>
    </location>
    <ligand>
        <name>[4Fe-4S] cluster</name>
        <dbReference type="ChEBI" id="CHEBI:49883"/>
    </ligand>
</feature>
<feature type="modified residue" description="Phosphoserine" evidence="3">
    <location>
        <position position="264"/>
    </location>
</feature>
<name>D11L8_HUMAN</name>
<dbReference type="EC" id="5.6.2.-" evidence="6"/>
<dbReference type="EMBL" id="AC009533">
    <property type="status" value="NOT_ANNOTATED_CDS"/>
    <property type="molecule type" value="Genomic_DNA"/>
</dbReference>
<dbReference type="FunCoup" id="A8MPP1">
    <property type="interactions" value="1339"/>
</dbReference>
<dbReference type="IntAct" id="A8MPP1">
    <property type="interactions" value="14"/>
</dbReference>
<dbReference type="GlyGen" id="A8MPP1">
    <property type="glycosylation" value="2 sites, 1 O-linked glycan (2 sites)"/>
</dbReference>
<dbReference type="iPTMnet" id="A8MPP1"/>
<dbReference type="PhosphoSitePlus" id="A8MPP1"/>
<dbReference type="BioMuta" id="HGNC:37101"/>
<dbReference type="jPOST" id="A8MPP1"/>
<dbReference type="MassIVE" id="A8MPP1"/>
<dbReference type="ProteomicsDB" id="1904"/>
<dbReference type="Pumba" id="A8MPP1"/>
<dbReference type="AGR" id="HGNC:37101"/>
<dbReference type="GeneCards" id="DDX11L8"/>
<dbReference type="HGNC" id="HGNC:37101">
    <property type="gene designation" value="DDX11L8"/>
</dbReference>
<dbReference type="neXtProt" id="NX_A8MPP1"/>
<dbReference type="InParanoid" id="A8MPP1"/>
<dbReference type="OrthoDB" id="267079at2759"/>
<dbReference type="PAN-GO" id="A8MPP1">
    <property type="GO annotations" value="4 GO annotations based on evolutionary models"/>
</dbReference>
<dbReference type="PhylomeDB" id="A8MPP1"/>
<dbReference type="PathwayCommons" id="A8MPP1"/>
<dbReference type="Pharos" id="A8MPP1">
    <property type="development level" value="Tdark"/>
</dbReference>
<dbReference type="PRO" id="PR:A8MPP1"/>
<dbReference type="Proteomes" id="UP000005640">
    <property type="component" value="Unplaced"/>
</dbReference>
<dbReference type="RNAct" id="A8MPP1">
    <property type="molecule type" value="protein"/>
</dbReference>
<dbReference type="GO" id="GO:0005730">
    <property type="term" value="C:nucleolus"/>
    <property type="evidence" value="ECO:0007669"/>
    <property type="project" value="UniProtKB-SubCell"/>
</dbReference>
<dbReference type="GO" id="GO:0005634">
    <property type="term" value="C:nucleus"/>
    <property type="evidence" value="ECO:0000318"/>
    <property type="project" value="GO_Central"/>
</dbReference>
<dbReference type="GO" id="GO:0005524">
    <property type="term" value="F:ATP binding"/>
    <property type="evidence" value="ECO:0007669"/>
    <property type="project" value="UniProtKB-KW"/>
</dbReference>
<dbReference type="GO" id="GO:0003677">
    <property type="term" value="F:DNA binding"/>
    <property type="evidence" value="ECO:0007669"/>
    <property type="project" value="UniProtKB-KW"/>
</dbReference>
<dbReference type="GO" id="GO:0003678">
    <property type="term" value="F:DNA helicase activity"/>
    <property type="evidence" value="ECO:0000318"/>
    <property type="project" value="GO_Central"/>
</dbReference>
<dbReference type="GO" id="GO:0016818">
    <property type="term" value="F:hydrolase activity, acting on acid anhydrides, in phosphorus-containing anhydrides"/>
    <property type="evidence" value="ECO:0007669"/>
    <property type="project" value="InterPro"/>
</dbReference>
<dbReference type="GO" id="GO:0051536">
    <property type="term" value="F:iron-sulfur cluster binding"/>
    <property type="evidence" value="ECO:0007669"/>
    <property type="project" value="UniProtKB-KW"/>
</dbReference>
<dbReference type="GO" id="GO:0046872">
    <property type="term" value="F:metal ion binding"/>
    <property type="evidence" value="ECO:0007669"/>
    <property type="project" value="UniProtKB-KW"/>
</dbReference>
<dbReference type="GO" id="GO:0003723">
    <property type="term" value="F:RNA binding"/>
    <property type="evidence" value="ECO:0007669"/>
    <property type="project" value="UniProtKB-KW"/>
</dbReference>
<dbReference type="GO" id="GO:0003724">
    <property type="term" value="F:RNA helicase activity"/>
    <property type="evidence" value="ECO:0007669"/>
    <property type="project" value="UniProtKB-EC"/>
</dbReference>
<dbReference type="GO" id="GO:0034085">
    <property type="term" value="P:establishment of sister chromatid cohesion"/>
    <property type="evidence" value="ECO:0000318"/>
    <property type="project" value="GO_Central"/>
</dbReference>
<dbReference type="GO" id="GO:0006139">
    <property type="term" value="P:nucleobase-containing compound metabolic process"/>
    <property type="evidence" value="ECO:0007669"/>
    <property type="project" value="InterPro"/>
</dbReference>
<dbReference type="CDD" id="cd18788">
    <property type="entry name" value="SF2_C_XPD"/>
    <property type="match status" value="1"/>
</dbReference>
<dbReference type="FunFam" id="3.40.50.300:FF:001050">
    <property type="entry name" value="ATP-dependent DNA helicase DDX11"/>
    <property type="match status" value="1"/>
</dbReference>
<dbReference type="FunFam" id="3.40.50.300:FF:003220">
    <property type="entry name" value="ATP-dependent DNA helicase DDX11"/>
    <property type="match status" value="1"/>
</dbReference>
<dbReference type="FunFam" id="3.40.50.300:FF:000909">
    <property type="entry name" value="Putative ATP-dependent RNA helicase DDX11"/>
    <property type="match status" value="1"/>
</dbReference>
<dbReference type="Gene3D" id="3.40.50.300">
    <property type="entry name" value="P-loop containing nucleotide triphosphate hydrolases"/>
    <property type="match status" value="3"/>
</dbReference>
<dbReference type="InterPro" id="IPR006555">
    <property type="entry name" value="ATP-dep_Helicase_C"/>
</dbReference>
<dbReference type="InterPro" id="IPR045028">
    <property type="entry name" value="DinG/Rad3-like"/>
</dbReference>
<dbReference type="InterPro" id="IPR014013">
    <property type="entry name" value="Helic_SF1/SF2_ATP-bd_DinG/Rad3"/>
</dbReference>
<dbReference type="InterPro" id="IPR006554">
    <property type="entry name" value="Helicase-like_DEXD_c2"/>
</dbReference>
<dbReference type="InterPro" id="IPR027417">
    <property type="entry name" value="P-loop_NTPase"/>
</dbReference>
<dbReference type="InterPro" id="IPR010614">
    <property type="entry name" value="RAD3-like_helicase_DEAD"/>
</dbReference>
<dbReference type="InterPro" id="IPR013020">
    <property type="entry name" value="Rad3/Chl1-like"/>
</dbReference>
<dbReference type="NCBIfam" id="TIGR00604">
    <property type="entry name" value="rad3"/>
    <property type="match status" value="1"/>
</dbReference>
<dbReference type="PANTHER" id="PTHR11472:SF41">
    <property type="entry name" value="ATP-DEPENDENT DNA HELICASE DDX11-RELATED"/>
    <property type="match status" value="1"/>
</dbReference>
<dbReference type="PANTHER" id="PTHR11472">
    <property type="entry name" value="DNA REPAIR DEAD HELICASE RAD3/XP-D SUBFAMILY MEMBER"/>
    <property type="match status" value="1"/>
</dbReference>
<dbReference type="Pfam" id="PF06733">
    <property type="entry name" value="DEAD_2"/>
    <property type="match status" value="1"/>
</dbReference>
<dbReference type="Pfam" id="PF13307">
    <property type="entry name" value="Helicase_C_2"/>
    <property type="match status" value="1"/>
</dbReference>
<dbReference type="SMART" id="SM00488">
    <property type="entry name" value="DEXDc2"/>
    <property type="match status" value="1"/>
</dbReference>
<dbReference type="SMART" id="SM00491">
    <property type="entry name" value="HELICc2"/>
    <property type="match status" value="1"/>
</dbReference>
<dbReference type="SUPFAM" id="SSF52540">
    <property type="entry name" value="P-loop containing nucleoside triphosphate hydrolases"/>
    <property type="match status" value="1"/>
</dbReference>
<dbReference type="PROSITE" id="PS51193">
    <property type="entry name" value="HELICASE_ATP_BIND_2"/>
    <property type="match status" value="1"/>
</dbReference>
<comment type="function">
    <text evidence="6">Putative DNA helicase.</text>
</comment>
<comment type="cofactor">
    <cofactor evidence="2">
        <name>[4Fe-4S] cluster</name>
        <dbReference type="ChEBI" id="CHEBI:49883"/>
    </cofactor>
    <text evidence="2">Binds 1 [4Fe-4S] cluster.</text>
</comment>
<comment type="interaction">
    <interactant intactId="EBI-5463183">
        <id>A8MPP1</id>
    </interactant>
    <interactant intactId="EBI-8826747">
        <id>PRO_0000308465</id>
        <dbReference type="UniProtKB" id="P29991"/>
    </interactant>
    <organismsDiffer>true</organismsDiffer>
    <experiments>3</experiments>
</comment>
<comment type="subcellular location">
    <subcellularLocation>
        <location evidence="1">Nucleus</location>
        <location evidence="1">Nucleolus</location>
    </subcellularLocation>
</comment>
<comment type="similarity">
    <text evidence="6">Belongs to the DEAD box helicase family. DEAH subfamily. DDX11/CHL1 sub-subfamily.</text>
</comment>
<comment type="caution">
    <text evidence="6">Defined as a pseudogene by HGNC. However, proteomics data suggest the existence of the protein.</text>
</comment>
<protein>
    <recommendedName>
        <fullName evidence="6">Putative ATP-dependent DNA helicase DDX11-like protein 8</fullName>
        <ecNumber evidence="6">5.6.2.-</ecNumber>
    </recommendedName>
    <alternativeName>
        <fullName>DEAD/H box protein 11-like 8</fullName>
    </alternativeName>
</protein>
<keyword id="KW-0067">ATP-binding</keyword>
<keyword id="KW-0238">DNA-binding</keyword>
<keyword id="KW-0347">Helicase</keyword>
<keyword id="KW-0378">Hydrolase</keyword>
<keyword id="KW-0408">Iron</keyword>
<keyword id="KW-0411">Iron-sulfur</keyword>
<keyword id="KW-0413">Isomerase</keyword>
<keyword id="KW-0479">Metal-binding</keyword>
<keyword id="KW-0547">Nucleotide-binding</keyword>
<keyword id="KW-0539">Nucleus</keyword>
<keyword id="KW-0597">Phosphoprotein</keyword>
<keyword id="KW-1267">Proteomics identification</keyword>
<keyword id="KW-1185">Reference proteome</keyword>
<keyword id="KW-0694">RNA-binding</keyword>
<sequence length="907" mass="101811">MANETQKVGAIHFPFPFTPYSIQEDFMAELYRVLEAGKIGIFESPTGTGKSLSLICGALSWLRDFEQKKREEEARLLETGTGPLHDEKDESLCLSSSCEGAAGTPRPAGEPAWVTQFVQKKEERDLVDRLKVEQARRKQREERLQQLQHRVQLKYAAKRLRQEEEETENLLRLSREMLETGPEAERLEQLESGEEELVLAEYESDEEKKVASGHRVDEDEDDLEEEHITKIYHCSRTHSQLAQFVHEVKKSPFGKDVRLVSLGSRQNLCVNEDVRSLGSVQLINDRCVDMQRSRHEKKKGAEEEKPKRRRQEKQAACPFYNHEQMGLLRDEALAEVKDMEQLLALGKEARACPYYRSRLAIPAAKLVVLPYQMLLHAATRQAAGIRLQDQVVIIDEAHNLIDTITGMHSVEVSGSQLCQAHSQLLQYMERYGKRLKAKNLMYLKQILYLLEKFVAVLGGNIKQNPNTQSLSQTGTELKTINDFLFQSQIDNINLFKVQRYCEKSMISRKLFGFTERYGAVFSSREQPKLAGFQQFLQSLQPRTTEALAAPADESQASVPQPASPLMHIEGFLAALTTANQDGRVILSRQGSLSESTLKFLLLNPAVHFAQVVKECRAVVIAGGTMQPVSDFRQQLLACAGVEAERVVEFSCGHVIPPDNIPLVICSGISNQPLEFTFQKRDLPQMMDEVGRILCNLCGVVSGGVVCFFSSYEYLRQVHAHWEKGGLLGRLAARKKIFQEPKSAHQVEQVLLAYSRCIQACGQERGQVTEALLLSVVGGKMSEGINFSDNLGRCVVMVGMPFPNIRSAELQEKMAYLDQTLPRAPGQAPPGKALVENLCMKAVNQSIGRAIRHQKDFASIVLLDQRYARPPVLAKLPAWIRASVEVKATFGPAIAAVQKFHREKSASS</sequence>
<proteinExistence type="evidence at protein level"/>
<evidence type="ECO:0000250" key="1"/>
<evidence type="ECO:0000250" key="2">
    <source>
        <dbReference type="UniProtKB" id="P18074"/>
    </source>
</evidence>
<evidence type="ECO:0000250" key="3">
    <source>
        <dbReference type="UniProtKB" id="Q96FC9"/>
    </source>
</evidence>
<evidence type="ECO:0000255" key="4">
    <source>
        <dbReference type="PROSITE-ProRule" id="PRU00541"/>
    </source>
</evidence>
<evidence type="ECO:0000256" key="5">
    <source>
        <dbReference type="SAM" id="MobiDB-lite"/>
    </source>
</evidence>
<evidence type="ECO:0000305" key="6"/>